<feature type="peptide" id="PRO_0000043706" description="FMRFamide-like neuropeptide PF1">
    <location>
        <begin position="1"/>
        <end position="8"/>
    </location>
</feature>
<feature type="modified residue" description="Phenylalanine amide" evidence="1">
    <location>
        <position position="8"/>
    </location>
</feature>
<reference key="1">
    <citation type="journal article" date="1992" name="Peptides">
        <title>Two FMRFamide-like peptides from the free-living nematode Panagrellus redivivus.</title>
        <authorList>
            <person name="Geary T.G."/>
            <person name="Price D.A."/>
            <person name="Bowman J.W."/>
            <person name="Winterrowd C.A."/>
            <person name="Mackenzie C.D."/>
            <person name="Garrison R.D."/>
            <person name="Williams J.F."/>
            <person name="Friedman A.R."/>
        </authorList>
    </citation>
    <scope>PROTEIN SEQUENCE</scope>
    <scope>AMIDATION AT PHE-8</scope>
</reference>
<sequence length="8" mass="995">SDPNFLRF</sequence>
<name>FAR1_PANRE</name>
<dbReference type="Proteomes" id="UP000492821">
    <property type="component" value="Unplaced"/>
</dbReference>
<dbReference type="GO" id="GO:0005576">
    <property type="term" value="C:extracellular region"/>
    <property type="evidence" value="ECO:0007669"/>
    <property type="project" value="UniProtKB-SubCell"/>
</dbReference>
<dbReference type="GO" id="GO:0007218">
    <property type="term" value="P:neuropeptide signaling pathway"/>
    <property type="evidence" value="ECO:0007669"/>
    <property type="project" value="UniProtKB-KW"/>
</dbReference>
<keyword id="KW-0027">Amidation</keyword>
<keyword id="KW-0903">Direct protein sequencing</keyword>
<keyword id="KW-0527">Neuropeptide</keyword>
<keyword id="KW-1185">Reference proteome</keyword>
<keyword id="KW-0964">Secreted</keyword>
<proteinExistence type="evidence at protein level"/>
<evidence type="ECO:0000269" key="1">
    <source>
    </source>
</evidence>
<evidence type="ECO:0000305" key="2"/>
<organism>
    <name type="scientific">Panagrellus redivivus</name>
    <name type="common">Microworm</name>
    <dbReference type="NCBI Taxonomy" id="6233"/>
    <lineage>
        <taxon>Eukaryota</taxon>
        <taxon>Metazoa</taxon>
        <taxon>Ecdysozoa</taxon>
        <taxon>Nematoda</taxon>
        <taxon>Chromadorea</taxon>
        <taxon>Rhabditida</taxon>
        <taxon>Tylenchina</taxon>
        <taxon>Panagrolaimomorpha</taxon>
        <taxon>Panagrolaimoidea</taxon>
        <taxon>Panagrolaimidae</taxon>
        <taxon>Panagrellus</taxon>
    </lineage>
</organism>
<protein>
    <recommendedName>
        <fullName>FMRFamide-like neuropeptide PF1</fullName>
    </recommendedName>
    <alternativeName>
        <fullName>SDPNFLRF-amide</fullName>
    </alternativeName>
</protein>
<comment type="function">
    <text>Myoactive.</text>
</comment>
<comment type="subcellular location">
    <subcellularLocation>
        <location>Secreted</location>
    </subcellularLocation>
</comment>
<comment type="tissue specificity">
    <text>Nerve cords and paired groups of cells located caudally to the base of the pharynx.</text>
</comment>
<comment type="similarity">
    <text evidence="2">Belongs to the FARP (FMRFamide related peptide) family.</text>
</comment>
<accession>P41872</accession>